<sequence length="67" mass="7627">MKTQFAILLITLVLFQMFSQSDAILGKIWEGIKSIFGKRGLNDLSDLDELFDGEISEADVDFLREIM</sequence>
<feature type="signal peptide" evidence="2">
    <location>
        <begin position="1"/>
        <end position="23"/>
    </location>
</feature>
<feature type="peptide" id="PRO_0000428684" description="Peptide Hp1036" evidence="7">
    <location>
        <begin position="24"/>
        <end position="36"/>
    </location>
</feature>
<feature type="propeptide" id="PRO_0000428685" evidence="7">
    <location>
        <begin position="40"/>
        <end position="67"/>
    </location>
</feature>
<feature type="modified residue" description="Phenylalanine amide" evidence="7">
    <location>
        <position position="36"/>
    </location>
</feature>
<name>NDB4T_HETPE</name>
<evidence type="ECO:0000250" key="1"/>
<evidence type="ECO:0000255" key="2"/>
<evidence type="ECO:0000269" key="3">
    <source>
    </source>
</evidence>
<evidence type="ECO:0000303" key="4">
    <source>
    </source>
</evidence>
<evidence type="ECO:0000305" key="5"/>
<evidence type="ECO:0000305" key="6">
    <source>
    </source>
</evidence>
<evidence type="ECO:0000305" key="7">
    <source>
    </source>
</evidence>
<protein>
    <recommendedName>
        <fullName evidence="4">Peptide Hp1036</fullName>
    </recommendedName>
</protein>
<keyword id="KW-0027">Amidation</keyword>
<keyword id="KW-0044">Antibiotic</keyword>
<keyword id="KW-0929">Antimicrobial</keyword>
<keyword id="KW-0930">Antiviral protein</keyword>
<keyword id="KW-0165">Cleavage on pair of basic residues</keyword>
<keyword id="KW-0472">Membrane</keyword>
<keyword id="KW-0964">Secreted</keyword>
<keyword id="KW-0732">Signal</keyword>
<keyword id="KW-1052">Target cell membrane</keyword>
<keyword id="KW-1053">Target membrane</keyword>
<comment type="function">
    <text evidence="1 3">Amphipathic peptide with antibacterial activities (By similarity). Shows antiviral activities against the herpes simplex virus type-1. It potently inhibits the initial infection by provoking the rupture of viral envelop and the dissociation of proteins from the virions (EC(50) is 0.43 uM). It also effectively inhibits viral attachment (EC(50) is 2.87 uM), viral entry (EC(50) is 4.29 uM) and viral proliferation after infection (EC(50) is 7.86). Morever, it enters mammalian tested cells (Vero) and reduces the intracellular infectivity.</text>
</comment>
<comment type="subcellular location">
    <subcellularLocation>
        <location evidence="1">Secreted</location>
    </subcellularLocation>
    <subcellularLocation>
        <location evidence="1">Target cell membrane</location>
    </subcellularLocation>
    <text evidence="1">Forms an alpha-helical membrane channel in the prey.</text>
</comment>
<comment type="tissue specificity">
    <text evidence="6">Expressed by the venom gland.</text>
</comment>
<comment type="similarity">
    <text evidence="5">Belongs to the non-disulfide-bridged peptide (NDBP) superfamily. Short antimicrobial peptide (group 4) family.</text>
</comment>
<accession>P0DME6</accession>
<proteinExistence type="evidence at protein level"/>
<reference key="1">
    <citation type="journal article" date="2010" name="Proteomics">
        <title>Molecular diversity of toxic components from the scorpion Heterometrus petersii venom revealed by proteomic and transcriptome analysis.</title>
        <authorList>
            <person name="Ma Y."/>
            <person name="Zhao Y."/>
            <person name="Zhao R."/>
            <person name="Zhang W."/>
            <person name="He Y."/>
            <person name="Wu Y."/>
            <person name="Cao Z."/>
            <person name="Guo L."/>
            <person name="Li W."/>
        </authorList>
    </citation>
    <scope>NUCLEOTIDE SEQUENCE [MRNA]</scope>
    <source>
        <tissue>Venom gland</tissue>
    </source>
</reference>
<reference key="2">
    <citation type="journal article" date="2014" name="Antiviral Res.">
        <title>Inhibitory activity and mechanism of two scorpion venom peptides against herpes simplex virus type 1.</title>
        <authorList>
            <person name="Hong W."/>
            <person name="Li T."/>
            <person name="Song Y."/>
            <person name="Zhang R."/>
            <person name="Zeng Z."/>
            <person name="Han S."/>
            <person name="Zhang X."/>
            <person name="Wu Y."/>
            <person name="Li W."/>
            <person name="Cao Z."/>
        </authorList>
    </citation>
    <scope>SYNTHESIS OF 24-36</scope>
    <scope>FUNCTION</scope>
    <scope>PROBABLE AMIDATION AT PHE-36</scope>
</reference>
<dbReference type="SMR" id="P0DME6"/>
<dbReference type="GO" id="GO:0005576">
    <property type="term" value="C:extracellular region"/>
    <property type="evidence" value="ECO:0007669"/>
    <property type="project" value="UniProtKB-SubCell"/>
</dbReference>
<dbReference type="GO" id="GO:0016020">
    <property type="term" value="C:membrane"/>
    <property type="evidence" value="ECO:0007669"/>
    <property type="project" value="UniProtKB-KW"/>
</dbReference>
<dbReference type="GO" id="GO:0044218">
    <property type="term" value="C:other organism cell membrane"/>
    <property type="evidence" value="ECO:0007669"/>
    <property type="project" value="UniProtKB-KW"/>
</dbReference>
<dbReference type="GO" id="GO:0042742">
    <property type="term" value="P:defense response to bacterium"/>
    <property type="evidence" value="ECO:0007669"/>
    <property type="project" value="UniProtKB-KW"/>
</dbReference>
<dbReference type="GO" id="GO:0050688">
    <property type="term" value="P:regulation of defense response to virus"/>
    <property type="evidence" value="ECO:0007669"/>
    <property type="project" value="UniProtKB-KW"/>
</dbReference>
<organism>
    <name type="scientific">Heterometrus petersii</name>
    <name type="common">Asian forest scorpion</name>
    <dbReference type="NCBI Taxonomy" id="754296"/>
    <lineage>
        <taxon>Eukaryota</taxon>
        <taxon>Metazoa</taxon>
        <taxon>Ecdysozoa</taxon>
        <taxon>Arthropoda</taxon>
        <taxon>Chelicerata</taxon>
        <taxon>Arachnida</taxon>
        <taxon>Scorpiones</taxon>
        <taxon>Iurida</taxon>
        <taxon>Scorpionoidea</taxon>
        <taxon>Scorpionidae</taxon>
        <taxon>Heterometrinae</taxon>
        <taxon>Heterometrus</taxon>
    </lineage>
</organism>